<dbReference type="PIR" id="A01300">
    <property type="entry name" value="TIZB1A"/>
</dbReference>
<dbReference type="PIR" id="B01300">
    <property type="entry name" value="TIZB1B"/>
</dbReference>
<dbReference type="PIR" id="C01300">
    <property type="entry name" value="TIZB1P"/>
</dbReference>
<dbReference type="SMR" id="P01061"/>
<dbReference type="MEROPS" id="I12.001"/>
<dbReference type="MEROPS" id="I12.008"/>
<dbReference type="GO" id="GO:0005576">
    <property type="term" value="C:extracellular region"/>
    <property type="evidence" value="ECO:0007669"/>
    <property type="project" value="InterPro"/>
</dbReference>
<dbReference type="GO" id="GO:0004867">
    <property type="term" value="F:serine-type endopeptidase inhibitor activity"/>
    <property type="evidence" value="ECO:0007669"/>
    <property type="project" value="UniProtKB-KW"/>
</dbReference>
<dbReference type="CDD" id="cd00023">
    <property type="entry name" value="BBI"/>
    <property type="match status" value="1"/>
</dbReference>
<dbReference type="FunFam" id="2.10.69.10:FF:000001">
    <property type="entry name" value="Bowman-Birk type proteinase inhibitor"/>
    <property type="match status" value="1"/>
</dbReference>
<dbReference type="Gene3D" id="2.10.69.10">
    <property type="entry name" value="Cysteine Protease (Bromelain) Inhibitor, subunit H"/>
    <property type="match status" value="1"/>
</dbReference>
<dbReference type="InterPro" id="IPR035995">
    <property type="entry name" value="Bowman-Birk_prot_inh"/>
</dbReference>
<dbReference type="InterPro" id="IPR000877">
    <property type="entry name" value="Prot_inh_BBI"/>
</dbReference>
<dbReference type="PANTHER" id="PTHR33479">
    <property type="entry name" value="BOWMAN-BIRK TYPE BRAN TRYPSIN INHIBITOR"/>
    <property type="match status" value="1"/>
</dbReference>
<dbReference type="PANTHER" id="PTHR33479:SF19">
    <property type="entry name" value="BOWMAN-BIRK TYPE PROTEINASE INHIBITOR C-II"/>
    <property type="match status" value="1"/>
</dbReference>
<dbReference type="Pfam" id="PF00228">
    <property type="entry name" value="Bowman-Birk_leg"/>
    <property type="match status" value="2"/>
</dbReference>
<dbReference type="SMART" id="SM00269">
    <property type="entry name" value="BowB"/>
    <property type="match status" value="1"/>
</dbReference>
<dbReference type="SUPFAM" id="SSF57247">
    <property type="entry name" value="Bowman-Birk inhibitor, BBI"/>
    <property type="match status" value="1"/>
</dbReference>
<dbReference type="PROSITE" id="PS00281">
    <property type="entry name" value="BOWMAN_BIRK"/>
    <property type="match status" value="1"/>
</dbReference>
<proteinExistence type="evidence at protein level"/>
<organism>
    <name type="scientific">Phaseolus angularis</name>
    <name type="common">Azuki bean</name>
    <name type="synonym">Vigna angularis</name>
    <dbReference type="NCBI Taxonomy" id="3914"/>
    <lineage>
        <taxon>Eukaryota</taxon>
        <taxon>Viridiplantae</taxon>
        <taxon>Streptophyta</taxon>
        <taxon>Embryophyta</taxon>
        <taxon>Tracheophyta</taxon>
        <taxon>Spermatophyta</taxon>
        <taxon>Magnoliopsida</taxon>
        <taxon>eudicotyledons</taxon>
        <taxon>Gunneridae</taxon>
        <taxon>Pentapetalae</taxon>
        <taxon>rosids</taxon>
        <taxon>fabids</taxon>
        <taxon>Fabales</taxon>
        <taxon>Fabaceae</taxon>
        <taxon>Papilionoideae</taxon>
        <taxon>50 kb inversion clade</taxon>
        <taxon>NPAAA clade</taxon>
        <taxon>indigoferoid/millettioid clade</taxon>
        <taxon>Phaseoleae</taxon>
        <taxon>Vigna</taxon>
    </lineage>
</organism>
<comment type="function">
    <text>These inhibitors strongly inhibit trypsin.</text>
</comment>
<comment type="miscellaneous">
    <text>The I-A sequence is shown.</text>
</comment>
<comment type="similarity">
    <text evidence="3">Belongs to the Bowman-Birk serine protease inhibitor family.</text>
</comment>
<sequence length="78" mass="8675">SVHHQDSSDEPSESSHPCCDLCLCTKSIPPQCQCADIRLDSCHSACKSCMCTRSMPGQCRCLDTHDFCHKPCKSRDKD</sequence>
<evidence type="ECO:0000250" key="1"/>
<evidence type="ECO:0000250" key="2">
    <source>
        <dbReference type="UniProtKB" id="P80321"/>
    </source>
</evidence>
<evidence type="ECO:0000305" key="3"/>
<protein>
    <recommendedName>
        <fullName>Bowman-Birk type proteinase inhibitors I-A, I-B, and I-A'</fullName>
    </recommendedName>
</protein>
<name>IBB2_PHAAN</name>
<feature type="chain" id="PRO_0000105847" description="Bowman-Birk type proteinase inhibitors I-A, I-B, and I-A'">
    <location>
        <begin position="1"/>
        <end position="78"/>
    </location>
</feature>
<feature type="site" description="Reactive bond" evidence="1">
    <location>
        <begin position="26"/>
        <end position="27"/>
    </location>
</feature>
<feature type="site" description="Reactive bond" evidence="1">
    <location>
        <begin position="53"/>
        <end position="54"/>
    </location>
</feature>
<feature type="disulfide bond" evidence="2">
    <location>
        <begin position="18"/>
        <end position="72"/>
    </location>
</feature>
<feature type="disulfide bond" evidence="2">
    <location>
        <begin position="19"/>
        <end position="34"/>
    </location>
</feature>
<feature type="disulfide bond" evidence="2">
    <location>
        <begin position="22"/>
        <end position="68"/>
    </location>
</feature>
<feature type="disulfide bond" evidence="2">
    <location>
        <begin position="24"/>
        <end position="32"/>
    </location>
</feature>
<feature type="disulfide bond" evidence="2">
    <location>
        <begin position="42"/>
        <end position="49"/>
    </location>
</feature>
<feature type="disulfide bond" evidence="2">
    <location>
        <begin position="46"/>
        <end position="61"/>
    </location>
</feature>
<feature type="disulfide bond" evidence="2">
    <location>
        <begin position="51"/>
        <end position="59"/>
    </location>
</feature>
<feature type="sequence variant" description="In the I-A' sequence.">
    <location>
        <begin position="1"/>
        <end position="6"/>
    </location>
</feature>
<feature type="sequence variant" description="In the I-A' sequence.">
    <original>D</original>
    <variation>N</variation>
    <location>
        <position position="40"/>
    </location>
</feature>
<feature type="sequence variant" description="In the I-B sequence.">
    <original>R</original>
    <variation>H</variation>
    <location>
        <position position="60"/>
    </location>
</feature>
<accession>P01061</accession>
<reference key="1">
    <citation type="journal article" date="1981" name="J. Biochem.">
        <title>The amino acid sequences of proteinase inhibitors I-A and I-A' from adzuki beans.</title>
        <authorList>
            <person name="Kiyohara T."/>
            <person name="Yokota K."/>
            <person name="Masaki Y."/>
            <person name="Matsui O."/>
            <person name="Iwasaki T."/>
            <person name="Yoshikawa M."/>
        </authorList>
    </citation>
    <scope>PROTEIN SEQUENCE</scope>
</reference>
<keyword id="KW-0903">Direct protein sequencing</keyword>
<keyword id="KW-1015">Disulfide bond</keyword>
<keyword id="KW-0646">Protease inhibitor</keyword>
<keyword id="KW-0722">Serine protease inhibitor</keyword>